<protein>
    <recommendedName>
        <fullName evidence="1">Thymidylate synthase</fullName>
        <shortName evidence="1">TS</shortName>
        <shortName evidence="1">TSase</shortName>
        <ecNumber evidence="1">2.1.1.45</ecNumber>
    </recommendedName>
</protein>
<dbReference type="EC" id="2.1.1.45" evidence="1"/>
<dbReference type="EMBL" id="AP009044">
    <property type="protein sequence ID" value="BAF53934.1"/>
    <property type="molecule type" value="Genomic_DNA"/>
</dbReference>
<dbReference type="RefSeq" id="WP_003862391.1">
    <property type="nucleotide sequence ID" value="NC_009342.1"/>
</dbReference>
<dbReference type="SMR" id="A4QCI7"/>
<dbReference type="GeneID" id="1018839"/>
<dbReference type="KEGG" id="cgt:cgR_0959"/>
<dbReference type="HOGENOM" id="CLU_021669_0_0_11"/>
<dbReference type="PhylomeDB" id="A4QCI7"/>
<dbReference type="UniPathway" id="UPA00575"/>
<dbReference type="Proteomes" id="UP000006698">
    <property type="component" value="Chromosome"/>
</dbReference>
<dbReference type="GO" id="GO:0005829">
    <property type="term" value="C:cytosol"/>
    <property type="evidence" value="ECO:0007669"/>
    <property type="project" value="TreeGrafter"/>
</dbReference>
<dbReference type="GO" id="GO:0004799">
    <property type="term" value="F:thymidylate synthase activity"/>
    <property type="evidence" value="ECO:0007669"/>
    <property type="project" value="UniProtKB-UniRule"/>
</dbReference>
<dbReference type="GO" id="GO:0006231">
    <property type="term" value="P:dTMP biosynthetic process"/>
    <property type="evidence" value="ECO:0007669"/>
    <property type="project" value="UniProtKB-UniRule"/>
</dbReference>
<dbReference type="GO" id="GO:0006235">
    <property type="term" value="P:dTTP biosynthetic process"/>
    <property type="evidence" value="ECO:0007669"/>
    <property type="project" value="UniProtKB-UniRule"/>
</dbReference>
<dbReference type="GO" id="GO:0032259">
    <property type="term" value="P:methylation"/>
    <property type="evidence" value="ECO:0007669"/>
    <property type="project" value="UniProtKB-KW"/>
</dbReference>
<dbReference type="CDD" id="cd00351">
    <property type="entry name" value="TS_Pyrimidine_HMase"/>
    <property type="match status" value="1"/>
</dbReference>
<dbReference type="FunFam" id="3.30.572.10:FF:000013">
    <property type="entry name" value="Thymidylate synthase"/>
    <property type="match status" value="1"/>
</dbReference>
<dbReference type="Gene3D" id="3.30.572.10">
    <property type="entry name" value="Thymidylate synthase/dCMP hydroxymethylase domain"/>
    <property type="match status" value="1"/>
</dbReference>
<dbReference type="HAMAP" id="MF_00008">
    <property type="entry name" value="Thymidy_synth_bact"/>
    <property type="match status" value="1"/>
</dbReference>
<dbReference type="InterPro" id="IPR045097">
    <property type="entry name" value="Thymidate_synth/dCMP_Mease"/>
</dbReference>
<dbReference type="InterPro" id="IPR023451">
    <property type="entry name" value="Thymidate_synth/dCMP_Mease_dom"/>
</dbReference>
<dbReference type="InterPro" id="IPR036926">
    <property type="entry name" value="Thymidate_synth/dCMP_Mease_sf"/>
</dbReference>
<dbReference type="InterPro" id="IPR000398">
    <property type="entry name" value="Thymidylate_synthase"/>
</dbReference>
<dbReference type="InterPro" id="IPR020940">
    <property type="entry name" value="Thymidylate_synthase_AS"/>
</dbReference>
<dbReference type="NCBIfam" id="NF002497">
    <property type="entry name" value="PRK01827.1-3"/>
    <property type="match status" value="1"/>
</dbReference>
<dbReference type="NCBIfam" id="NF002499">
    <property type="entry name" value="PRK01827.1-5"/>
    <property type="match status" value="1"/>
</dbReference>
<dbReference type="NCBIfam" id="TIGR03284">
    <property type="entry name" value="thym_sym"/>
    <property type="match status" value="2"/>
</dbReference>
<dbReference type="PANTHER" id="PTHR11548:SF9">
    <property type="entry name" value="THYMIDYLATE SYNTHASE"/>
    <property type="match status" value="1"/>
</dbReference>
<dbReference type="PANTHER" id="PTHR11548">
    <property type="entry name" value="THYMIDYLATE SYNTHASE 1"/>
    <property type="match status" value="1"/>
</dbReference>
<dbReference type="Pfam" id="PF00303">
    <property type="entry name" value="Thymidylat_synt"/>
    <property type="match status" value="1"/>
</dbReference>
<dbReference type="PRINTS" id="PR00108">
    <property type="entry name" value="THYMDSNTHASE"/>
</dbReference>
<dbReference type="SUPFAM" id="SSF55831">
    <property type="entry name" value="Thymidylate synthase/dCMP hydroxymethylase"/>
    <property type="match status" value="1"/>
</dbReference>
<dbReference type="PROSITE" id="PS00091">
    <property type="entry name" value="THYMIDYLATE_SYNTHASE"/>
    <property type="match status" value="1"/>
</dbReference>
<name>TYSY_CORGB</name>
<sequence>MTVPTPYEDLLRKIAEEGSHKDDRTGTGTTSLFGQQIRFDLNEGFPLLTTKKVHFHSVVGELLWFLQGDSNVKWLQDNNIRIWNEWADEDGELGPVYGVQWRSWPTPDGRHIDQISGALETLRNNPDSRRNIVSAWNVSELENMALPPCHLLFQLYVADGKLSCQLYQRSADMFLGVPFNIASYALLTHMFAQQAGLEVGEFIWTGGDCHIYDNHKEQVAEQLSREARPYPTLELNKAASMFEYSFDDITVSGYDPHPLIRGKVAV</sequence>
<reference key="1">
    <citation type="journal article" date="2007" name="Microbiology">
        <title>Comparative analysis of the Corynebacterium glutamicum group and complete genome sequence of strain R.</title>
        <authorList>
            <person name="Yukawa H."/>
            <person name="Omumasaba C.A."/>
            <person name="Nonaka H."/>
            <person name="Kos P."/>
            <person name="Okai N."/>
            <person name="Suzuki N."/>
            <person name="Suda M."/>
            <person name="Tsuge Y."/>
            <person name="Watanabe J."/>
            <person name="Ikeda Y."/>
            <person name="Vertes A.A."/>
            <person name="Inui M."/>
        </authorList>
    </citation>
    <scope>NUCLEOTIDE SEQUENCE [LARGE SCALE GENOMIC DNA]</scope>
    <source>
        <strain>R</strain>
    </source>
</reference>
<keyword id="KW-0963">Cytoplasm</keyword>
<keyword id="KW-0489">Methyltransferase</keyword>
<keyword id="KW-0545">Nucleotide biosynthesis</keyword>
<keyword id="KW-0808">Transferase</keyword>
<comment type="function">
    <text evidence="1">Catalyzes the reductive methylation of 2'-deoxyuridine-5'-monophosphate (dUMP) to 2'-deoxythymidine-5'-monophosphate (dTMP) while utilizing 5,10-methylenetetrahydrofolate (mTHF) as the methyl donor and reductant in the reaction, yielding dihydrofolate (DHF) as a by-product. This enzymatic reaction provides an intracellular de novo source of dTMP, an essential precursor for DNA biosynthesis.</text>
</comment>
<comment type="catalytic activity">
    <reaction evidence="1">
        <text>dUMP + (6R)-5,10-methylene-5,6,7,8-tetrahydrofolate = 7,8-dihydrofolate + dTMP</text>
        <dbReference type="Rhea" id="RHEA:12104"/>
        <dbReference type="ChEBI" id="CHEBI:15636"/>
        <dbReference type="ChEBI" id="CHEBI:57451"/>
        <dbReference type="ChEBI" id="CHEBI:63528"/>
        <dbReference type="ChEBI" id="CHEBI:246422"/>
        <dbReference type="EC" id="2.1.1.45"/>
    </reaction>
</comment>
<comment type="pathway">
    <text evidence="1">Pyrimidine metabolism; dTTP biosynthesis.</text>
</comment>
<comment type="subunit">
    <text evidence="1">Homodimer.</text>
</comment>
<comment type="subcellular location">
    <subcellularLocation>
        <location evidence="1">Cytoplasm</location>
    </subcellularLocation>
</comment>
<comment type="similarity">
    <text evidence="1">Belongs to the thymidylate synthase family. Bacterial-type ThyA subfamily.</text>
</comment>
<proteinExistence type="inferred from homology"/>
<evidence type="ECO:0000255" key="1">
    <source>
        <dbReference type="HAMAP-Rule" id="MF_00008"/>
    </source>
</evidence>
<feature type="chain" id="PRO_0000321467" description="Thymidylate synthase">
    <location>
        <begin position="1"/>
        <end position="266"/>
    </location>
</feature>
<feature type="active site" description="Nucleophile" evidence="1">
    <location>
        <position position="149"/>
    </location>
</feature>
<feature type="binding site" description="in other chain" evidence="1">
    <location>
        <position position="24"/>
    </location>
    <ligand>
        <name>dUMP</name>
        <dbReference type="ChEBI" id="CHEBI:246422"/>
        <note>ligand shared between dimeric partners</note>
    </ligand>
</feature>
<feature type="binding site" evidence="1">
    <location>
        <position position="54"/>
    </location>
    <ligand>
        <name>(6R)-5,10-methylene-5,6,7,8-tetrahydrofolate</name>
        <dbReference type="ChEBI" id="CHEBI:15636"/>
    </ligand>
</feature>
<feature type="binding site" evidence="1">
    <location>
        <begin position="129"/>
        <end position="130"/>
    </location>
    <ligand>
        <name>dUMP</name>
        <dbReference type="ChEBI" id="CHEBI:246422"/>
        <note>ligand shared between dimeric partners</note>
    </ligand>
</feature>
<feature type="binding site" description="in other chain" evidence="1">
    <location>
        <begin position="169"/>
        <end position="172"/>
    </location>
    <ligand>
        <name>dUMP</name>
        <dbReference type="ChEBI" id="CHEBI:246422"/>
        <note>ligand shared between dimeric partners</note>
    </ligand>
</feature>
<feature type="binding site" evidence="1">
    <location>
        <position position="172"/>
    </location>
    <ligand>
        <name>(6R)-5,10-methylene-5,6,7,8-tetrahydrofolate</name>
        <dbReference type="ChEBI" id="CHEBI:15636"/>
    </ligand>
</feature>
<feature type="binding site" description="in other chain" evidence="1">
    <location>
        <position position="180"/>
    </location>
    <ligand>
        <name>dUMP</name>
        <dbReference type="ChEBI" id="CHEBI:246422"/>
        <note>ligand shared between dimeric partners</note>
    </ligand>
</feature>
<feature type="binding site" description="in other chain" evidence="1">
    <location>
        <begin position="210"/>
        <end position="212"/>
    </location>
    <ligand>
        <name>dUMP</name>
        <dbReference type="ChEBI" id="CHEBI:246422"/>
        <note>ligand shared between dimeric partners</note>
    </ligand>
</feature>
<feature type="binding site" evidence="1">
    <location>
        <position position="265"/>
    </location>
    <ligand>
        <name>(6R)-5,10-methylene-5,6,7,8-tetrahydrofolate</name>
        <dbReference type="ChEBI" id="CHEBI:15636"/>
    </ligand>
</feature>
<organism>
    <name type="scientific">Corynebacterium glutamicum (strain R)</name>
    <dbReference type="NCBI Taxonomy" id="340322"/>
    <lineage>
        <taxon>Bacteria</taxon>
        <taxon>Bacillati</taxon>
        <taxon>Actinomycetota</taxon>
        <taxon>Actinomycetes</taxon>
        <taxon>Mycobacteriales</taxon>
        <taxon>Corynebacteriaceae</taxon>
        <taxon>Corynebacterium</taxon>
    </lineage>
</organism>
<gene>
    <name evidence="1" type="primary">thyA</name>
    <name type="ordered locus">cgR_0959</name>
</gene>
<accession>A4QCI7</accession>